<keyword id="KW-0963">Cytoplasm</keyword>
<keyword id="KW-0488">Methylation</keyword>
<keyword id="KW-0648">Protein biosynthesis</keyword>
<keyword id="KW-1185">Reference proteome</keyword>
<evidence type="ECO:0000255" key="1">
    <source>
        <dbReference type="HAMAP-Rule" id="MF_00093"/>
    </source>
</evidence>
<dbReference type="EMBL" id="AP009256">
    <property type="protein sequence ID" value="BAF39222.1"/>
    <property type="molecule type" value="Genomic_DNA"/>
</dbReference>
<dbReference type="RefSeq" id="WP_003808375.1">
    <property type="nucleotide sequence ID" value="NZ_CAXVNC010000001.1"/>
</dbReference>
<dbReference type="SMR" id="A1A0I9"/>
<dbReference type="STRING" id="367928.BAD_0441"/>
<dbReference type="PaxDb" id="1680-BADO_0456"/>
<dbReference type="GeneID" id="4556583"/>
<dbReference type="KEGG" id="bad:BAD_0441"/>
<dbReference type="HOGENOM" id="CLU_036856_0_1_11"/>
<dbReference type="Proteomes" id="UP000008702">
    <property type="component" value="Chromosome"/>
</dbReference>
<dbReference type="GO" id="GO:0005737">
    <property type="term" value="C:cytoplasm"/>
    <property type="evidence" value="ECO:0007669"/>
    <property type="project" value="UniProtKB-SubCell"/>
</dbReference>
<dbReference type="GO" id="GO:0016149">
    <property type="term" value="F:translation release factor activity, codon specific"/>
    <property type="evidence" value="ECO:0007669"/>
    <property type="project" value="UniProtKB-UniRule"/>
</dbReference>
<dbReference type="FunFam" id="3.30.160.20:FF:000004">
    <property type="entry name" value="Peptide chain release factor 1"/>
    <property type="match status" value="1"/>
</dbReference>
<dbReference type="Gene3D" id="3.30.160.20">
    <property type="match status" value="1"/>
</dbReference>
<dbReference type="Gene3D" id="3.30.70.1660">
    <property type="match status" value="1"/>
</dbReference>
<dbReference type="Gene3D" id="6.10.140.1950">
    <property type="match status" value="1"/>
</dbReference>
<dbReference type="HAMAP" id="MF_00093">
    <property type="entry name" value="Rel_fac_1"/>
    <property type="match status" value="1"/>
</dbReference>
<dbReference type="InterPro" id="IPR005139">
    <property type="entry name" value="PCRF"/>
</dbReference>
<dbReference type="InterPro" id="IPR000352">
    <property type="entry name" value="Pep_chain_release_fac_I"/>
</dbReference>
<dbReference type="InterPro" id="IPR045853">
    <property type="entry name" value="Pep_chain_release_fac_I_sf"/>
</dbReference>
<dbReference type="InterPro" id="IPR050057">
    <property type="entry name" value="Prokaryotic/Mito_RF"/>
</dbReference>
<dbReference type="InterPro" id="IPR004373">
    <property type="entry name" value="RF-1"/>
</dbReference>
<dbReference type="NCBIfam" id="TIGR00019">
    <property type="entry name" value="prfA"/>
    <property type="match status" value="1"/>
</dbReference>
<dbReference type="NCBIfam" id="NF001859">
    <property type="entry name" value="PRK00591.1"/>
    <property type="match status" value="1"/>
</dbReference>
<dbReference type="PANTHER" id="PTHR43804">
    <property type="entry name" value="LD18447P"/>
    <property type="match status" value="1"/>
</dbReference>
<dbReference type="PANTHER" id="PTHR43804:SF7">
    <property type="entry name" value="LD18447P"/>
    <property type="match status" value="1"/>
</dbReference>
<dbReference type="Pfam" id="PF03462">
    <property type="entry name" value="PCRF"/>
    <property type="match status" value="1"/>
</dbReference>
<dbReference type="Pfam" id="PF00472">
    <property type="entry name" value="RF-1"/>
    <property type="match status" value="1"/>
</dbReference>
<dbReference type="SMART" id="SM00937">
    <property type="entry name" value="PCRF"/>
    <property type="match status" value="1"/>
</dbReference>
<dbReference type="SUPFAM" id="SSF75620">
    <property type="entry name" value="Release factor"/>
    <property type="match status" value="1"/>
</dbReference>
<proteinExistence type="inferred from homology"/>
<feature type="chain" id="PRO_1000093424" description="Peptide chain release factor 1">
    <location>
        <begin position="1"/>
        <end position="362"/>
    </location>
</feature>
<feature type="modified residue" description="N5-methylglutamine" evidence="1">
    <location>
        <position position="240"/>
    </location>
</feature>
<gene>
    <name evidence="1" type="primary">prfA</name>
    <name type="ordered locus">BAD_0441</name>
</gene>
<organism>
    <name type="scientific">Bifidobacterium adolescentis (strain ATCC 15703 / DSM 20083 / NCTC 11814 / E194a)</name>
    <dbReference type="NCBI Taxonomy" id="367928"/>
    <lineage>
        <taxon>Bacteria</taxon>
        <taxon>Bacillati</taxon>
        <taxon>Actinomycetota</taxon>
        <taxon>Actinomycetes</taxon>
        <taxon>Bifidobacteriales</taxon>
        <taxon>Bifidobacteriaceae</taxon>
        <taxon>Bifidobacterium</taxon>
    </lineage>
</organism>
<name>RF1_BIFAA</name>
<reference key="1">
    <citation type="submission" date="2006-12" db="EMBL/GenBank/DDBJ databases">
        <title>Bifidobacterium adolescentis complete genome sequence.</title>
        <authorList>
            <person name="Suzuki T."/>
            <person name="Tsuda Y."/>
            <person name="Kanou N."/>
            <person name="Inoue T."/>
            <person name="Kumazaki K."/>
            <person name="Nagano S."/>
            <person name="Hirai S."/>
            <person name="Tanaka K."/>
            <person name="Watanabe K."/>
        </authorList>
    </citation>
    <scope>NUCLEOTIDE SEQUENCE [LARGE SCALE GENOMIC DNA]</scope>
    <source>
        <strain>ATCC 15703 / DSM 20083 / NCTC 11814 / E194a</strain>
    </source>
</reference>
<accession>A1A0I9</accession>
<comment type="function">
    <text evidence="1">Peptide chain release factor 1 directs the termination of translation in response to the peptide chain termination codons UAG and UAA.</text>
</comment>
<comment type="subcellular location">
    <subcellularLocation>
        <location evidence="1">Cytoplasm</location>
    </subcellularLocation>
</comment>
<comment type="PTM">
    <text evidence="1">Methylated by PrmC. Methylation increases the termination efficiency of RF1.</text>
</comment>
<comment type="similarity">
    <text evidence="1">Belongs to the prokaryotic/mitochondrial release factor family.</text>
</comment>
<protein>
    <recommendedName>
        <fullName evidence="1">Peptide chain release factor 1</fullName>
        <shortName evidence="1">RF-1</shortName>
    </recommendedName>
</protein>
<sequence length="362" mass="40213">MADEQFPAAVTALEEYHNIEQQMAEPEVASNPDKMRKLGRRHAELGAIVSAYTAYKQVKDDLEAAREMASEDPDFAEEAKRLEGELPAAEEKLRTALIPRDPDDARDTIMEIKAGTGGEEAALFAGDLLRMYMRYAEKRGWSVTVQSENTTELGGVKDVQLAIRAKGTPAPEDGVWASLKYEGGVHRVQRIPVTESQGRIQTSAAGVIVFPEADEDDDEIEIDPKDLKIDIFMSSGPGGQSVNTTYSAVRMTHIPTGITVNMQDEKSQIQNRAAALRVLKSRLLAMKHEQEAAEAADMRHSQVRSLDRSERIRTYNFPENRIVDHRTNYKAYNLDAVLDGDLQAVIDSDIQADEADRLANQK</sequence>